<gene>
    <name type="primary">FP</name>
</gene>
<proteinExistence type="predicted"/>
<dbReference type="EMBL" id="U58676">
    <property type="protein sequence ID" value="AAC18646.1"/>
    <property type="molecule type" value="Genomic_DNA"/>
</dbReference>
<dbReference type="EMBL" id="U79640">
    <property type="protein sequence ID" value="AAC56568.1"/>
    <property type="molecule type" value="Genomic_DNA"/>
</dbReference>
<dbReference type="InterPro" id="IPR004941">
    <property type="entry name" value="FP_N"/>
</dbReference>
<dbReference type="Pfam" id="PF03258">
    <property type="entry name" value="Baculo_FP"/>
    <property type="match status" value="1"/>
</dbReference>
<dbReference type="Pfam" id="PF25298">
    <property type="entry name" value="Baculo_FP_2nd"/>
    <property type="match status" value="1"/>
</dbReference>
<protein>
    <recommendedName>
        <fullName>FP protein</fullName>
    </recommendedName>
</protein>
<name>FP_NPVLD</name>
<accession>Q90179</accession>
<accession>P91746</accession>
<feature type="chain" id="PRO_0000132873" description="FP protein">
    <location>
        <begin position="1"/>
        <end position="217"/>
    </location>
</feature>
<feature type="sequence variant" description="In strain: Isolate 122-2.">
    <location>
        <begin position="106"/>
        <end position="113"/>
    </location>
</feature>
<sequence>MDMDFDLINVSGLKKLIKTEIDRNVSESLDALAQKLQRLEKNSLNCSVEIYGLADTRPFFDRKVKNYYIKKICALLGLNFKAVLESETKNNYILVHLKDAATARDWQTRSCQVRLKNRDLGVEYDGPVKIFVAASRERKQLLKKTRDALLPHFKYVSLCKAGVMARRNDSSEIYIIKDERDIHKLVGQRAEASIDSSVVAISFEGDDDPAKNYSHII</sequence>
<organismHost>
    <name type="scientific">Lepidoptera</name>
    <name type="common">butterflies and moths</name>
    <dbReference type="NCBI Taxonomy" id="7088"/>
</organismHost>
<organism>
    <name type="scientific">Lymantria dispar multicapsid nuclear polyhedrosis virus</name>
    <name type="common">LdMNPV</name>
    <dbReference type="NCBI Taxonomy" id="10449"/>
    <lineage>
        <taxon>Viruses</taxon>
        <taxon>Viruses incertae sedis</taxon>
        <taxon>Naldaviricetes</taxon>
        <taxon>Lefavirales</taxon>
        <taxon>Baculoviridae</taxon>
        <taxon>Alphabaculovirus</taxon>
        <taxon>Alphabaculovirus lydisparis</taxon>
    </lineage>
</organism>
<reference key="1">
    <citation type="journal article" date="1996" name="J. Gen. Virol.">
        <title>Characterization of the Lymantria dispar nucleopolyhedrovirus 25K FP gene.</title>
        <authorList>
            <person name="Bischoff D.S."/>
            <person name="Slavicek J.M."/>
        </authorList>
    </citation>
    <scope>NUCLEOTIDE SEQUENCE [GENOMIC DNA]</scope>
</reference>
<reference key="2">
    <citation type="journal article" date="1997" name="J. Virol.">
        <title>Phenotypic and genetic analysis of Lymantria dispar nucleopolyhedrovirus few polyhedra mutants: mutations in the 25K FP gene may be caused by DNA replication errors.</title>
        <authorList>
            <person name="Bischoff D.S."/>
            <person name="Slavicek J.M."/>
        </authorList>
    </citation>
    <scope>NUCLEOTIDE SEQUENCE [GENOMIC DNA]</scope>
    <source>
        <strain>Isolate 122-2</strain>
    </source>
</reference>